<comment type="function">
    <text evidence="1">Plays an important role in the de novo pathway of purine nucleotide biosynthesis. Catalyzes the first committed step in the biosynthesis of AMP from IMP.</text>
</comment>
<comment type="catalytic activity">
    <reaction evidence="1">
        <text>IMP + L-aspartate + GTP = N(6)-(1,2-dicarboxyethyl)-AMP + GDP + phosphate + 2 H(+)</text>
        <dbReference type="Rhea" id="RHEA:15753"/>
        <dbReference type="ChEBI" id="CHEBI:15378"/>
        <dbReference type="ChEBI" id="CHEBI:29991"/>
        <dbReference type="ChEBI" id="CHEBI:37565"/>
        <dbReference type="ChEBI" id="CHEBI:43474"/>
        <dbReference type="ChEBI" id="CHEBI:57567"/>
        <dbReference type="ChEBI" id="CHEBI:58053"/>
        <dbReference type="ChEBI" id="CHEBI:58189"/>
        <dbReference type="EC" id="6.3.4.4"/>
    </reaction>
</comment>
<comment type="cofactor">
    <cofactor evidence="1">
        <name>Mg(2+)</name>
        <dbReference type="ChEBI" id="CHEBI:18420"/>
    </cofactor>
    <text evidence="1">Binds 1 Mg(2+) ion per subunit.</text>
</comment>
<comment type="pathway">
    <text evidence="1">Purine metabolism; AMP biosynthesis via de novo pathway; AMP from IMP: step 1/2.</text>
</comment>
<comment type="subunit">
    <text evidence="1">Homodimer.</text>
</comment>
<comment type="subcellular location">
    <subcellularLocation>
        <location evidence="1">Cytoplasm</location>
    </subcellularLocation>
</comment>
<comment type="similarity">
    <text evidence="1">Belongs to the adenylosuccinate synthetase family.</text>
</comment>
<feature type="chain" id="PRO_1000000929" description="Adenylosuccinate synthetase">
    <location>
        <begin position="1"/>
        <end position="430"/>
    </location>
</feature>
<feature type="active site" description="Proton acceptor" evidence="1">
    <location>
        <position position="13"/>
    </location>
</feature>
<feature type="active site" description="Proton donor" evidence="1">
    <location>
        <position position="41"/>
    </location>
</feature>
<feature type="binding site" evidence="1">
    <location>
        <begin position="12"/>
        <end position="18"/>
    </location>
    <ligand>
        <name>GTP</name>
        <dbReference type="ChEBI" id="CHEBI:37565"/>
    </ligand>
</feature>
<feature type="binding site" description="in other chain" evidence="1">
    <location>
        <begin position="13"/>
        <end position="16"/>
    </location>
    <ligand>
        <name>IMP</name>
        <dbReference type="ChEBI" id="CHEBI:58053"/>
        <note>ligand shared between dimeric partners</note>
    </ligand>
</feature>
<feature type="binding site" evidence="1">
    <location>
        <position position="13"/>
    </location>
    <ligand>
        <name>Mg(2+)</name>
        <dbReference type="ChEBI" id="CHEBI:18420"/>
    </ligand>
</feature>
<feature type="binding site" description="in other chain" evidence="1">
    <location>
        <begin position="38"/>
        <end position="41"/>
    </location>
    <ligand>
        <name>IMP</name>
        <dbReference type="ChEBI" id="CHEBI:58053"/>
        <note>ligand shared between dimeric partners</note>
    </ligand>
</feature>
<feature type="binding site" evidence="1">
    <location>
        <begin position="40"/>
        <end position="42"/>
    </location>
    <ligand>
        <name>GTP</name>
        <dbReference type="ChEBI" id="CHEBI:37565"/>
    </ligand>
</feature>
<feature type="binding site" evidence="1">
    <location>
        <position position="40"/>
    </location>
    <ligand>
        <name>Mg(2+)</name>
        <dbReference type="ChEBI" id="CHEBI:18420"/>
    </ligand>
</feature>
<feature type="binding site" description="in other chain" evidence="1">
    <location>
        <position position="128"/>
    </location>
    <ligand>
        <name>IMP</name>
        <dbReference type="ChEBI" id="CHEBI:58053"/>
        <note>ligand shared between dimeric partners</note>
    </ligand>
</feature>
<feature type="binding site" evidence="1">
    <location>
        <position position="142"/>
    </location>
    <ligand>
        <name>IMP</name>
        <dbReference type="ChEBI" id="CHEBI:58053"/>
        <note>ligand shared between dimeric partners</note>
    </ligand>
</feature>
<feature type="binding site" description="in other chain" evidence="1">
    <location>
        <position position="223"/>
    </location>
    <ligand>
        <name>IMP</name>
        <dbReference type="ChEBI" id="CHEBI:58053"/>
        <note>ligand shared between dimeric partners</note>
    </ligand>
</feature>
<feature type="binding site" description="in other chain" evidence="1">
    <location>
        <position position="238"/>
    </location>
    <ligand>
        <name>IMP</name>
        <dbReference type="ChEBI" id="CHEBI:58053"/>
        <note>ligand shared between dimeric partners</note>
    </ligand>
</feature>
<feature type="binding site" evidence="1">
    <location>
        <begin position="298"/>
        <end position="304"/>
    </location>
    <ligand>
        <name>substrate</name>
    </ligand>
</feature>
<feature type="binding site" description="in other chain" evidence="1">
    <location>
        <position position="302"/>
    </location>
    <ligand>
        <name>IMP</name>
        <dbReference type="ChEBI" id="CHEBI:58053"/>
        <note>ligand shared between dimeric partners</note>
    </ligand>
</feature>
<feature type="binding site" evidence="1">
    <location>
        <position position="304"/>
    </location>
    <ligand>
        <name>GTP</name>
        <dbReference type="ChEBI" id="CHEBI:37565"/>
    </ligand>
</feature>
<feature type="binding site" evidence="1">
    <location>
        <begin position="330"/>
        <end position="332"/>
    </location>
    <ligand>
        <name>GTP</name>
        <dbReference type="ChEBI" id="CHEBI:37565"/>
    </ligand>
</feature>
<feature type="binding site" evidence="1">
    <location>
        <begin position="412"/>
        <end position="414"/>
    </location>
    <ligand>
        <name>GTP</name>
        <dbReference type="ChEBI" id="CHEBI:37565"/>
    </ligand>
</feature>
<name>PURA_STRPF</name>
<keyword id="KW-0963">Cytoplasm</keyword>
<keyword id="KW-0342">GTP-binding</keyword>
<keyword id="KW-0436">Ligase</keyword>
<keyword id="KW-0460">Magnesium</keyword>
<keyword id="KW-0479">Metal-binding</keyword>
<keyword id="KW-0547">Nucleotide-binding</keyword>
<keyword id="KW-0658">Purine biosynthesis</keyword>
<reference key="1">
    <citation type="journal article" date="2006" name="Proc. Natl. Acad. Sci. U.S.A.">
        <title>Molecular genetic anatomy of inter- and intraserotype variation in the human bacterial pathogen group A Streptococcus.</title>
        <authorList>
            <person name="Beres S.B."/>
            <person name="Richter E.W."/>
            <person name="Nagiec M.J."/>
            <person name="Sumby P."/>
            <person name="Porcella S.F."/>
            <person name="DeLeo F.R."/>
            <person name="Musser J.M."/>
        </authorList>
    </citation>
    <scope>NUCLEOTIDE SEQUENCE [LARGE SCALE GENOMIC DNA]</scope>
    <source>
        <strain>MGAS10750</strain>
    </source>
</reference>
<protein>
    <recommendedName>
        <fullName evidence="1">Adenylosuccinate synthetase</fullName>
        <shortName evidence="1">AMPSase</shortName>
        <shortName evidence="1">AdSS</shortName>
        <ecNumber evidence="1">6.3.4.4</ecNumber>
    </recommendedName>
    <alternativeName>
        <fullName evidence="1">IMP--aspartate ligase</fullName>
    </alternativeName>
</protein>
<accession>Q1J8S0</accession>
<evidence type="ECO:0000255" key="1">
    <source>
        <dbReference type="HAMAP-Rule" id="MF_00011"/>
    </source>
</evidence>
<sequence>MTSVVVVGTQWGDEGKGKITDFLSADAEVIARYQGGDNAGHTIVIDGKKFKLHLIPSGIFFPQKISVIGNGVVVNPKSLVKELAYLHNEGVTTDNLRISDRAQVILPYHIQLDQLQEDAKGDNKIGTTIKGIGPAYMDKAARVGIRIADLLDKDIFAERLRINLAEKNRLFEKMYDSTPLDFDAIFEEYYAYGQEIKQYVTDTSVILNDALDAGKRVLFEGAQGVMLDIDQGTYPFVTSSNPVAGGVTIGSGVGPSKINKVVGVCKAYTSRVGDGPFPTELFDEVGERIREVGHEYGTTTGRPRRVGWFDSVVMRHSRRVSGITNLSLNSIDVLSGLDTVKICVAYDLDGKRIDYYPANLEQLKRCKPIYEELPGWQEDITGVRSLEELPENARNYVRRVGELVGVRISTFSVGPGREQTNILESVWASI</sequence>
<dbReference type="EC" id="6.3.4.4" evidence="1"/>
<dbReference type="EMBL" id="CP000262">
    <property type="protein sequence ID" value="ABF37091.1"/>
    <property type="molecule type" value="Genomic_DNA"/>
</dbReference>
<dbReference type="SMR" id="Q1J8S0"/>
<dbReference type="KEGG" id="spi:MGAS10750_Spy0141"/>
<dbReference type="HOGENOM" id="CLU_029848_0_0_9"/>
<dbReference type="UniPathway" id="UPA00075">
    <property type="reaction ID" value="UER00335"/>
</dbReference>
<dbReference type="Proteomes" id="UP000002434">
    <property type="component" value="Chromosome"/>
</dbReference>
<dbReference type="GO" id="GO:0005737">
    <property type="term" value="C:cytoplasm"/>
    <property type="evidence" value="ECO:0007669"/>
    <property type="project" value="UniProtKB-SubCell"/>
</dbReference>
<dbReference type="GO" id="GO:0004019">
    <property type="term" value="F:adenylosuccinate synthase activity"/>
    <property type="evidence" value="ECO:0007669"/>
    <property type="project" value="UniProtKB-UniRule"/>
</dbReference>
<dbReference type="GO" id="GO:0005525">
    <property type="term" value="F:GTP binding"/>
    <property type="evidence" value="ECO:0007669"/>
    <property type="project" value="UniProtKB-UniRule"/>
</dbReference>
<dbReference type="GO" id="GO:0000287">
    <property type="term" value="F:magnesium ion binding"/>
    <property type="evidence" value="ECO:0007669"/>
    <property type="project" value="UniProtKB-UniRule"/>
</dbReference>
<dbReference type="GO" id="GO:0044208">
    <property type="term" value="P:'de novo' AMP biosynthetic process"/>
    <property type="evidence" value="ECO:0007669"/>
    <property type="project" value="UniProtKB-UniRule"/>
</dbReference>
<dbReference type="GO" id="GO:0046040">
    <property type="term" value="P:IMP metabolic process"/>
    <property type="evidence" value="ECO:0007669"/>
    <property type="project" value="TreeGrafter"/>
</dbReference>
<dbReference type="CDD" id="cd03108">
    <property type="entry name" value="AdSS"/>
    <property type="match status" value="1"/>
</dbReference>
<dbReference type="FunFam" id="1.10.300.10:FF:000001">
    <property type="entry name" value="Adenylosuccinate synthetase"/>
    <property type="match status" value="1"/>
</dbReference>
<dbReference type="FunFam" id="3.90.170.10:FF:000001">
    <property type="entry name" value="Adenylosuccinate synthetase"/>
    <property type="match status" value="1"/>
</dbReference>
<dbReference type="Gene3D" id="3.40.440.10">
    <property type="entry name" value="Adenylosuccinate Synthetase, subunit A, domain 1"/>
    <property type="match status" value="1"/>
</dbReference>
<dbReference type="Gene3D" id="1.10.300.10">
    <property type="entry name" value="Adenylosuccinate Synthetase, subunit A, domain 2"/>
    <property type="match status" value="1"/>
</dbReference>
<dbReference type="Gene3D" id="3.90.170.10">
    <property type="entry name" value="Adenylosuccinate Synthetase, subunit A, domain 3"/>
    <property type="match status" value="1"/>
</dbReference>
<dbReference type="HAMAP" id="MF_00011">
    <property type="entry name" value="Adenylosucc_synth"/>
    <property type="match status" value="1"/>
</dbReference>
<dbReference type="InterPro" id="IPR018220">
    <property type="entry name" value="Adenylosuccin_syn_GTP-bd"/>
</dbReference>
<dbReference type="InterPro" id="IPR033128">
    <property type="entry name" value="Adenylosuccin_syn_Lys_AS"/>
</dbReference>
<dbReference type="InterPro" id="IPR042109">
    <property type="entry name" value="Adenylosuccinate_synth_dom1"/>
</dbReference>
<dbReference type="InterPro" id="IPR042110">
    <property type="entry name" value="Adenylosuccinate_synth_dom2"/>
</dbReference>
<dbReference type="InterPro" id="IPR042111">
    <property type="entry name" value="Adenylosuccinate_synth_dom3"/>
</dbReference>
<dbReference type="InterPro" id="IPR001114">
    <property type="entry name" value="Adenylosuccinate_synthetase"/>
</dbReference>
<dbReference type="InterPro" id="IPR027417">
    <property type="entry name" value="P-loop_NTPase"/>
</dbReference>
<dbReference type="NCBIfam" id="NF002223">
    <property type="entry name" value="PRK01117.1"/>
    <property type="match status" value="1"/>
</dbReference>
<dbReference type="NCBIfam" id="TIGR00184">
    <property type="entry name" value="purA"/>
    <property type="match status" value="1"/>
</dbReference>
<dbReference type="PANTHER" id="PTHR11846">
    <property type="entry name" value="ADENYLOSUCCINATE SYNTHETASE"/>
    <property type="match status" value="1"/>
</dbReference>
<dbReference type="PANTHER" id="PTHR11846:SF0">
    <property type="entry name" value="ADENYLOSUCCINATE SYNTHETASE"/>
    <property type="match status" value="1"/>
</dbReference>
<dbReference type="Pfam" id="PF00709">
    <property type="entry name" value="Adenylsucc_synt"/>
    <property type="match status" value="1"/>
</dbReference>
<dbReference type="SMART" id="SM00788">
    <property type="entry name" value="Adenylsucc_synt"/>
    <property type="match status" value="1"/>
</dbReference>
<dbReference type="SUPFAM" id="SSF52540">
    <property type="entry name" value="P-loop containing nucleoside triphosphate hydrolases"/>
    <property type="match status" value="1"/>
</dbReference>
<dbReference type="PROSITE" id="PS01266">
    <property type="entry name" value="ADENYLOSUCCIN_SYN_1"/>
    <property type="match status" value="1"/>
</dbReference>
<dbReference type="PROSITE" id="PS00513">
    <property type="entry name" value="ADENYLOSUCCIN_SYN_2"/>
    <property type="match status" value="1"/>
</dbReference>
<proteinExistence type="inferred from homology"/>
<gene>
    <name evidence="1" type="primary">purA</name>
    <name type="ordered locus">MGAS10750_Spy0141</name>
</gene>
<organism>
    <name type="scientific">Streptococcus pyogenes serotype M4 (strain MGAS10750)</name>
    <dbReference type="NCBI Taxonomy" id="370554"/>
    <lineage>
        <taxon>Bacteria</taxon>
        <taxon>Bacillati</taxon>
        <taxon>Bacillota</taxon>
        <taxon>Bacilli</taxon>
        <taxon>Lactobacillales</taxon>
        <taxon>Streptococcaceae</taxon>
        <taxon>Streptococcus</taxon>
    </lineage>
</organism>